<accession>Q15366</accession>
<accession>A8K7X6</accession>
<accession>B4DXP5</accession>
<accession>F8VYL7</accession>
<accession>G3V0E8</accession>
<accession>I6L8F9</accession>
<accession>Q32Q82</accession>
<accession>Q59HD4</accession>
<accession>Q68Y55</accession>
<accession>Q6IPF4</accession>
<accession>Q6PKG5</accession>
<comment type="function">
    <text evidence="1 3 5 7 8">Single-stranded nucleic acid binding protein that binds preferentially to oligo dC (PubMed:12414943, PubMed:7607214). Major cellular poly(rC)-binding protein (PubMed:12414943). Also binds poly(rU) (PubMed:12414943). Acts as a negative regulator of antiviral signaling (PubMed:19881509, PubMed:35322803). Negatively regulates cellular antiviral responses mediated by MAVS signaling (PubMed:19881509). It acts as an adapter between MAVS and the E3 ubiquitin ligase ITCH, therefore triggering MAVS ubiquitination and degradation (PubMed:19881509). Negativeley regulates the cGAS-STING pathway via interaction with CGAS, preventing the formation of liquid-like droplets in which CGAS is activated (PubMed:35322803). Together with PCBP1, required for erythropoiesis, possibly by regulating mRNA splicing (By similarity).</text>
</comment>
<comment type="function">
    <text evidence="3 6">(Microbial infection) In case of infection by poliovirus, binds to the viral internal ribosome entry site (IRES) and stimulates the IRES-mediated translation (PubMed:12414943, PubMed:24371074). Also plays a role in initiation of viral RNA replication in concert with the viral protein 3CD (PubMed:12414943).</text>
</comment>
<comment type="subunit">
    <text evidence="4 5 7">Identified in a mRNP complex, at least composed of DHX9, DDX3X, ELAVL1, HNRNPU, IGF2BP1, ILF3, PABPC1, PCBP2, PTBP2, STAU1, STAU2, SYNCRIP and YBX1 (PubMed:19029303). Interacts with IFIH1 and RNF135 (PubMed:19881509). Interacts with MAVS (via C-terminus) and ITCH (via WW domains) (PubMed:19881509). Interacts with CGAS; preventing the formation of liquid-like droplets in which CGAS is activated (PubMed:35322803).</text>
</comment>
<comment type="interaction">
    <interactant intactId="EBI-945799">
        <id>Q15366</id>
    </interactant>
    <interactant intactId="EBI-946095">
        <id>Q15365</id>
        <label>PCBP1</label>
    </interactant>
    <organismsDiffer>false</organismsDiffer>
    <experiments>2</experiments>
</comment>
<comment type="interaction">
    <interactant intactId="EBI-945799">
        <id>Q15366</id>
    </interactant>
    <interactant intactId="EBI-607085">
        <id>P09012</id>
        <label>SNRPA</label>
    </interactant>
    <organismsDiffer>false</organismsDiffer>
    <experiments>3</experiments>
</comment>
<comment type="interaction">
    <interactant intactId="EBI-945799">
        <id>Q15366</id>
    </interactant>
    <interactant intactId="EBI-372557">
        <id>P84103</id>
        <label>SRSF3</label>
    </interactant>
    <organismsDiffer>false</organismsDiffer>
    <experiments>3</experiments>
</comment>
<comment type="subcellular location">
    <subcellularLocation>
        <location evidence="8">Nucleus</location>
    </subcellularLocation>
    <subcellularLocation>
        <location evidence="4 8">Cytoplasm</location>
    </subcellularLocation>
    <text evidence="8">Loosely bound in the nucleus (PubMed:7607214). May shuttle between the nucleus and the cytoplasm (PubMed:7607214).</text>
</comment>
<comment type="alternative products">
    <event type="alternative splicing"/>
    <isoform>
        <id>Q15366-1</id>
        <name>1</name>
        <sequence type="displayed"/>
    </isoform>
    <isoform>
        <id>Q15366-2</id>
        <name>2</name>
        <sequence type="described" ref="VSP_042833"/>
    </isoform>
    <isoform>
        <id>Q15366-3</id>
        <name>3</name>
        <sequence type="described" ref="VSP_043161 VSP_042833"/>
    </isoform>
    <isoform>
        <id>Q15366-4</id>
        <name>4</name>
        <sequence type="described" ref="VSP_043161 VSP_043362 VSP_042833"/>
    </isoform>
    <isoform>
        <id>Q15366-5</id>
        <name>5</name>
        <sequence type="described" ref="VSP_043362 VSP_042833"/>
    </isoform>
    <isoform>
        <id>Q15366-6</id>
        <name>6</name>
        <sequence type="described" ref="VSP_043161"/>
    </isoform>
    <isoform>
        <id>Q15366-7</id>
        <name>7</name>
        <sequence type="described" ref="VSP_043161 VSP_043362 VSP_054045"/>
    </isoform>
    <isoform>
        <id>Q15366-8</id>
        <name>8</name>
        <sequence type="described" ref="VSP_043362 VSP_054045"/>
    </isoform>
</comment>
<comment type="tissue specificity">
    <text evidence="8">Detected in all tissues examined.</text>
</comment>
<comment type="domain">
    <text evidence="3">The KH domains mediates poly(C) binding.</text>
</comment>
<comment type="PTM">
    <text evidence="8">Phosphorylated. The non-phosphorylated form(s) exhibited the strongest poly(rC)-binding activity.</text>
</comment>
<comment type="PTM">
    <text evidence="6">(Microbial infection) Proteolytically cleaved by picornavirus proteinase 3CD.</text>
</comment>
<comment type="sequence caution" evidence="14">
    <conflict type="erroneous initiation">
        <sequence resource="EMBL-CDS" id="BAD92062"/>
    </conflict>
    <text>Extended N-terminus.</text>
</comment>
<name>PCBP2_HUMAN</name>
<keyword id="KW-0002">3D-structure</keyword>
<keyword id="KW-0025">Alternative splicing</keyword>
<keyword id="KW-0051">Antiviral defense</keyword>
<keyword id="KW-0963">Cytoplasm</keyword>
<keyword id="KW-0903">Direct protein sequencing</keyword>
<keyword id="KW-0238">DNA-binding</keyword>
<keyword id="KW-0945">Host-virus interaction</keyword>
<keyword id="KW-0391">Immunity</keyword>
<keyword id="KW-0399">Innate immunity</keyword>
<keyword id="KW-1017">Isopeptide bond</keyword>
<keyword id="KW-0539">Nucleus</keyword>
<keyword id="KW-0597">Phosphoprotein</keyword>
<keyword id="KW-1267">Proteomics identification</keyword>
<keyword id="KW-1185">Reference proteome</keyword>
<keyword id="KW-0677">Repeat</keyword>
<keyword id="KW-0687">Ribonucleoprotein</keyword>
<keyword id="KW-0694">RNA-binding</keyword>
<keyword id="KW-0832">Ubl conjugation</keyword>
<keyword id="KW-0693">Viral RNA replication</keyword>
<protein>
    <recommendedName>
        <fullName evidence="11">Poly(rC)-binding protein 2</fullName>
    </recommendedName>
    <alternativeName>
        <fullName>Alpha-CP2</fullName>
    </alternativeName>
    <alternativeName>
        <fullName>Heterogeneous nuclear ribonucleoprotein E2</fullName>
        <shortName>hnRNP E2</shortName>
    </alternativeName>
</protein>
<evidence type="ECO:0000250" key="1">
    <source>
        <dbReference type="UniProtKB" id="Q61990"/>
    </source>
</evidence>
<evidence type="ECO:0000255" key="2">
    <source>
        <dbReference type="PROSITE-ProRule" id="PRU00117"/>
    </source>
</evidence>
<evidence type="ECO:0000269" key="3">
    <source>
    </source>
</evidence>
<evidence type="ECO:0000269" key="4">
    <source>
    </source>
</evidence>
<evidence type="ECO:0000269" key="5">
    <source>
    </source>
</evidence>
<evidence type="ECO:0000269" key="6">
    <source>
    </source>
</evidence>
<evidence type="ECO:0000269" key="7">
    <source>
    </source>
</evidence>
<evidence type="ECO:0000269" key="8">
    <source>
    </source>
</evidence>
<evidence type="ECO:0000303" key="9">
    <source>
    </source>
</evidence>
<evidence type="ECO:0000303" key="10">
    <source>
    </source>
</evidence>
<evidence type="ECO:0000303" key="11">
    <source>
    </source>
</evidence>
<evidence type="ECO:0000303" key="12">
    <source ref="2"/>
</evidence>
<evidence type="ECO:0000303" key="13">
    <source ref="4"/>
</evidence>
<evidence type="ECO:0000305" key="14"/>
<evidence type="ECO:0000312" key="15">
    <source>
        <dbReference type="HGNC" id="HGNC:8648"/>
    </source>
</evidence>
<evidence type="ECO:0007744" key="16">
    <source>
    </source>
</evidence>
<evidence type="ECO:0007744" key="17">
    <source>
    </source>
</evidence>
<evidence type="ECO:0007744" key="18">
    <source>
    </source>
</evidence>
<evidence type="ECO:0007744" key="19">
    <source>
    </source>
</evidence>
<evidence type="ECO:0007744" key="20">
    <source>
    </source>
</evidence>
<evidence type="ECO:0007744" key="21">
    <source>
    </source>
</evidence>
<evidence type="ECO:0007829" key="22">
    <source>
        <dbReference type="PDB" id="2AXY"/>
    </source>
</evidence>
<evidence type="ECO:0007829" key="23">
    <source>
        <dbReference type="PDB" id="2JZX"/>
    </source>
</evidence>
<evidence type="ECO:0007829" key="24">
    <source>
        <dbReference type="PDB" id="2P2R"/>
    </source>
</evidence>
<organism>
    <name type="scientific">Homo sapiens</name>
    <name type="common">Human</name>
    <dbReference type="NCBI Taxonomy" id="9606"/>
    <lineage>
        <taxon>Eukaryota</taxon>
        <taxon>Metazoa</taxon>
        <taxon>Chordata</taxon>
        <taxon>Craniata</taxon>
        <taxon>Vertebrata</taxon>
        <taxon>Euteleostomi</taxon>
        <taxon>Mammalia</taxon>
        <taxon>Eutheria</taxon>
        <taxon>Euarchontoglires</taxon>
        <taxon>Primates</taxon>
        <taxon>Haplorrhini</taxon>
        <taxon>Catarrhini</taxon>
        <taxon>Hominidae</taxon>
        <taxon>Homo</taxon>
    </lineage>
</organism>
<feature type="chain" id="PRO_0000050090" description="Poly(rC)-binding protein 2">
    <location>
        <begin position="1"/>
        <end position="365"/>
    </location>
</feature>
<feature type="domain" description="KH 1" evidence="2">
    <location>
        <begin position="13"/>
        <end position="75"/>
    </location>
</feature>
<feature type="domain" description="KH 2" evidence="2">
    <location>
        <begin position="97"/>
        <end position="162"/>
    </location>
</feature>
<feature type="domain" description="KH 3" evidence="2">
    <location>
        <begin position="287"/>
        <end position="351"/>
    </location>
</feature>
<feature type="site" description="Cleavage, by viral proteinase 3CD" evidence="6">
    <location>
        <begin position="253"/>
        <end position="254"/>
    </location>
</feature>
<feature type="modified residue" description="Phosphoserine" evidence="18 19 20">
    <location>
        <position position="173"/>
    </location>
</feature>
<feature type="modified residue" description="Phosphoserine" evidence="17 18">
    <location>
        <position position="189"/>
    </location>
</feature>
<feature type="modified residue" description="Phosphoserine" evidence="16">
    <location>
        <position position="272"/>
    </location>
</feature>
<feature type="modified residue" description="Phosphoserine" evidence="18 19">
    <location>
        <position position="364"/>
    </location>
</feature>
<feature type="modified residue" description="Phosphoserine" evidence="19">
    <location>
        <position position="365"/>
    </location>
</feature>
<feature type="cross-link" description="Glycyl lysine isopeptide (Lys-Gly) (interchain with G-Cter in SUMO2)" evidence="21">
    <location>
        <position position="115"/>
    </location>
</feature>
<feature type="cross-link" description="Glycyl lysine isopeptide (Lys-Gly) (interchain with G-Cter in SUMO2)" evidence="21">
    <location>
        <position position="185"/>
    </location>
</feature>
<feature type="cross-link" description="Glycyl lysine isopeptide (Lys-Gly) (interchain with G-Cter in SUMO2)" evidence="21">
    <location>
        <position position="322"/>
    </location>
</feature>
<feature type="splice variant" id="VSP_043161" description="In isoform 3, isoform 4, isoform 6 and isoform 7." evidence="9 10 12 13">
    <location>
        <begin position="169"/>
        <end position="172"/>
    </location>
</feature>
<feature type="splice variant" id="VSP_043362" description="In isoform 4, isoform 5, isoform 7 and isoform 8." evidence="9 10 12">
    <location>
        <begin position="198"/>
        <end position="228"/>
    </location>
</feature>
<feature type="splice variant" id="VSP_054045" description="In isoform 7 and isoform 8." evidence="9">
    <original>GIESSSPEVKGYW</original>
    <variation>A</variation>
    <location>
        <begin position="267"/>
        <end position="279"/>
    </location>
</feature>
<feature type="splice variant" id="VSP_042833" description="In isoform 2, isoform 3, isoform 4 and isoform 5." evidence="9 10 12">
    <original>W</original>
    <variation>WA</variation>
    <location>
        <position position="279"/>
    </location>
</feature>
<feature type="strand" evidence="22">
    <location>
        <begin position="14"/>
        <end position="21"/>
    </location>
</feature>
<feature type="helix" evidence="22">
    <location>
        <begin position="22"/>
        <end position="29"/>
    </location>
</feature>
<feature type="helix" evidence="22">
    <location>
        <begin position="31"/>
        <end position="33"/>
    </location>
</feature>
<feature type="helix" evidence="22">
    <location>
        <begin position="34"/>
        <end position="43"/>
    </location>
</feature>
<feature type="strand" evidence="22">
    <location>
        <begin position="46"/>
        <end position="49"/>
    </location>
</feature>
<feature type="strand" evidence="22">
    <location>
        <begin position="55"/>
        <end position="63"/>
    </location>
</feature>
<feature type="helix" evidence="22">
    <location>
        <begin position="65"/>
        <end position="80"/>
    </location>
</feature>
<feature type="strand" evidence="23">
    <location>
        <begin position="89"/>
        <end position="91"/>
    </location>
</feature>
<feature type="strand" evidence="23">
    <location>
        <begin position="97"/>
        <end position="105"/>
    </location>
</feature>
<feature type="helix" evidence="23">
    <location>
        <begin position="106"/>
        <end position="113"/>
    </location>
</feature>
<feature type="helix" evidence="23">
    <location>
        <begin position="115"/>
        <end position="117"/>
    </location>
</feature>
<feature type="helix" evidence="23">
    <location>
        <begin position="118"/>
        <end position="127"/>
    </location>
</feature>
<feature type="strand" evidence="23">
    <location>
        <begin position="128"/>
        <end position="131"/>
    </location>
</feature>
<feature type="strand" evidence="23">
    <location>
        <begin position="143"/>
        <end position="150"/>
    </location>
</feature>
<feature type="helix" evidence="23">
    <location>
        <begin position="152"/>
        <end position="168"/>
    </location>
</feature>
<feature type="strand" evidence="24">
    <location>
        <begin position="288"/>
        <end position="295"/>
    </location>
</feature>
<feature type="helix" evidence="24">
    <location>
        <begin position="296"/>
        <end position="303"/>
    </location>
</feature>
<feature type="helix" evidence="24">
    <location>
        <begin position="305"/>
        <end position="307"/>
    </location>
</feature>
<feature type="helix" evidence="24">
    <location>
        <begin position="308"/>
        <end position="317"/>
    </location>
</feature>
<feature type="strand" evidence="24">
    <location>
        <begin position="320"/>
        <end position="323"/>
    </location>
</feature>
<feature type="strand" evidence="24">
    <location>
        <begin position="331"/>
        <end position="339"/>
    </location>
</feature>
<feature type="helix" evidence="24">
    <location>
        <begin position="341"/>
        <end position="355"/>
    </location>
</feature>
<gene>
    <name evidence="11 15" type="primary">PCBP2</name>
</gene>
<reference key="1">
    <citation type="journal article" date="1995" name="Eur. J. Biochem.">
        <title>Characterisation of two major cellular poly(rC)-binding human proteins, each containing three K-homologous (KH) domains.</title>
        <authorList>
            <person name="Leffers H."/>
            <person name="Dejgaard K."/>
            <person name="Celis J.E."/>
        </authorList>
    </citation>
    <scope>NUCLEOTIDE SEQUENCE [MRNA] (ISOFORM 1)</scope>
    <scope>FUNCTION</scope>
    <scope>SUBCELLULAR LOCATION</scope>
    <scope>PHOSPHORYLATION</scope>
    <scope>TISSUE SPECIFICITY</scope>
</reference>
<reference key="2">
    <citation type="submission" date="2004-08" db="EMBL/GenBank/DDBJ databases">
        <title>Homo sapiens mRNA.</title>
        <authorList>
            <person name="Sugiyama A."/>
            <person name="Inoue H."/>
            <person name="Oka M."/>
        </authorList>
    </citation>
    <scope>NUCLEOTIDE SEQUENCE [MRNA] (ISOFORM 4)</scope>
</reference>
<reference key="3">
    <citation type="journal article" date="2004" name="Nat. Genet.">
        <title>Complete sequencing and characterization of 21,243 full-length human cDNAs.</title>
        <authorList>
            <person name="Ota T."/>
            <person name="Suzuki Y."/>
            <person name="Nishikawa T."/>
            <person name="Otsuki T."/>
            <person name="Sugiyama T."/>
            <person name="Irie R."/>
            <person name="Wakamatsu A."/>
            <person name="Hayashi K."/>
            <person name="Sato H."/>
            <person name="Nagai K."/>
            <person name="Kimura K."/>
            <person name="Makita H."/>
            <person name="Sekine M."/>
            <person name="Obayashi M."/>
            <person name="Nishi T."/>
            <person name="Shibahara T."/>
            <person name="Tanaka T."/>
            <person name="Ishii S."/>
            <person name="Yamamoto J."/>
            <person name="Saito K."/>
            <person name="Kawai Y."/>
            <person name="Isono Y."/>
            <person name="Nakamura Y."/>
            <person name="Nagahari K."/>
            <person name="Murakami K."/>
            <person name="Yasuda T."/>
            <person name="Iwayanagi T."/>
            <person name="Wagatsuma M."/>
            <person name="Shiratori A."/>
            <person name="Sudo H."/>
            <person name="Hosoiri T."/>
            <person name="Kaku Y."/>
            <person name="Kodaira H."/>
            <person name="Kondo H."/>
            <person name="Sugawara M."/>
            <person name="Takahashi M."/>
            <person name="Kanda K."/>
            <person name="Yokoi T."/>
            <person name="Furuya T."/>
            <person name="Kikkawa E."/>
            <person name="Omura Y."/>
            <person name="Abe K."/>
            <person name="Kamihara K."/>
            <person name="Katsuta N."/>
            <person name="Sato K."/>
            <person name="Tanikawa M."/>
            <person name="Yamazaki M."/>
            <person name="Ninomiya K."/>
            <person name="Ishibashi T."/>
            <person name="Yamashita H."/>
            <person name="Murakawa K."/>
            <person name="Fujimori K."/>
            <person name="Tanai H."/>
            <person name="Kimata M."/>
            <person name="Watanabe M."/>
            <person name="Hiraoka S."/>
            <person name="Chiba Y."/>
            <person name="Ishida S."/>
            <person name="Ono Y."/>
            <person name="Takiguchi S."/>
            <person name="Watanabe S."/>
            <person name="Yosida M."/>
            <person name="Hotuta T."/>
            <person name="Kusano J."/>
            <person name="Kanehori K."/>
            <person name="Takahashi-Fujii A."/>
            <person name="Hara H."/>
            <person name="Tanase T.-O."/>
            <person name="Nomura Y."/>
            <person name="Togiya S."/>
            <person name="Komai F."/>
            <person name="Hara R."/>
            <person name="Takeuchi K."/>
            <person name="Arita M."/>
            <person name="Imose N."/>
            <person name="Musashino K."/>
            <person name="Yuuki H."/>
            <person name="Oshima A."/>
            <person name="Sasaki N."/>
            <person name="Aotsuka S."/>
            <person name="Yoshikawa Y."/>
            <person name="Matsunawa H."/>
            <person name="Ichihara T."/>
            <person name="Shiohata N."/>
            <person name="Sano S."/>
            <person name="Moriya S."/>
            <person name="Momiyama H."/>
            <person name="Satoh N."/>
            <person name="Takami S."/>
            <person name="Terashima Y."/>
            <person name="Suzuki O."/>
            <person name="Nakagawa S."/>
            <person name="Senoh A."/>
            <person name="Mizoguchi H."/>
            <person name="Goto Y."/>
            <person name="Shimizu F."/>
            <person name="Wakebe H."/>
            <person name="Hishigaki H."/>
            <person name="Watanabe T."/>
            <person name="Sugiyama A."/>
            <person name="Takemoto M."/>
            <person name="Kawakami B."/>
            <person name="Yamazaki M."/>
            <person name="Watanabe K."/>
            <person name="Kumagai A."/>
            <person name="Itakura S."/>
            <person name="Fukuzumi Y."/>
            <person name="Fujimori Y."/>
            <person name="Komiyama M."/>
            <person name="Tashiro H."/>
            <person name="Tanigami A."/>
            <person name="Fujiwara T."/>
            <person name="Ono T."/>
            <person name="Yamada K."/>
            <person name="Fujii Y."/>
            <person name="Ozaki K."/>
            <person name="Hirao M."/>
            <person name="Ohmori Y."/>
            <person name="Kawabata A."/>
            <person name="Hikiji T."/>
            <person name="Kobatake N."/>
            <person name="Inagaki H."/>
            <person name="Ikema Y."/>
            <person name="Okamoto S."/>
            <person name="Okitani R."/>
            <person name="Kawakami T."/>
            <person name="Noguchi S."/>
            <person name="Itoh T."/>
            <person name="Shigeta K."/>
            <person name="Senba T."/>
            <person name="Matsumura K."/>
            <person name="Nakajima Y."/>
            <person name="Mizuno T."/>
            <person name="Morinaga M."/>
            <person name="Sasaki M."/>
            <person name="Togashi T."/>
            <person name="Oyama M."/>
            <person name="Hata H."/>
            <person name="Watanabe M."/>
            <person name="Komatsu T."/>
            <person name="Mizushima-Sugano J."/>
            <person name="Satoh T."/>
            <person name="Shirai Y."/>
            <person name="Takahashi Y."/>
            <person name="Nakagawa K."/>
            <person name="Okumura K."/>
            <person name="Nagase T."/>
            <person name="Nomura N."/>
            <person name="Kikuchi H."/>
            <person name="Masuho Y."/>
            <person name="Yamashita R."/>
            <person name="Nakai K."/>
            <person name="Yada T."/>
            <person name="Nakamura Y."/>
            <person name="Ohara O."/>
            <person name="Isogai T."/>
            <person name="Sugano S."/>
        </authorList>
    </citation>
    <scope>NUCLEOTIDE SEQUENCE [LARGE SCALE MRNA] (ISOFORMS 3 AND 8)</scope>
    <source>
        <tissue>Synovium</tissue>
        <tissue>Testis</tissue>
    </source>
</reference>
<reference key="4">
    <citation type="submission" date="2005-03" db="EMBL/GenBank/DDBJ databases">
        <title>Homo sapiens protein coding cDNA.</title>
        <authorList>
            <person name="Totoki Y."/>
            <person name="Toyoda A."/>
            <person name="Takeda T."/>
            <person name="Sakaki Y."/>
            <person name="Tanaka A."/>
            <person name="Yokoyama S."/>
            <person name="Ohara O."/>
            <person name="Nagase T."/>
            <person name="Kikuno R.F."/>
        </authorList>
    </citation>
    <scope>NUCLEOTIDE SEQUENCE [LARGE SCALE MRNA] (ISOFORM 6)</scope>
    <source>
        <tissue>Brain</tissue>
    </source>
</reference>
<reference key="5">
    <citation type="journal article" date="2006" name="Nature">
        <title>The finished DNA sequence of human chromosome 12.</title>
        <authorList>
            <person name="Scherer S.E."/>
            <person name="Muzny D.M."/>
            <person name="Buhay C.J."/>
            <person name="Chen R."/>
            <person name="Cree A."/>
            <person name="Ding Y."/>
            <person name="Dugan-Rocha S."/>
            <person name="Gill R."/>
            <person name="Gunaratne P."/>
            <person name="Harris R.A."/>
            <person name="Hawes A.C."/>
            <person name="Hernandez J."/>
            <person name="Hodgson A.V."/>
            <person name="Hume J."/>
            <person name="Jackson A."/>
            <person name="Khan Z.M."/>
            <person name="Kovar-Smith C."/>
            <person name="Lewis L.R."/>
            <person name="Lozado R.J."/>
            <person name="Metzker M.L."/>
            <person name="Milosavljevic A."/>
            <person name="Miner G.R."/>
            <person name="Montgomery K.T."/>
            <person name="Morgan M.B."/>
            <person name="Nazareth L.V."/>
            <person name="Scott G."/>
            <person name="Sodergren E."/>
            <person name="Song X.-Z."/>
            <person name="Steffen D."/>
            <person name="Lovering R.C."/>
            <person name="Wheeler D.A."/>
            <person name="Worley K.C."/>
            <person name="Yuan Y."/>
            <person name="Zhang Z."/>
            <person name="Adams C.Q."/>
            <person name="Ansari-Lari M.A."/>
            <person name="Ayele M."/>
            <person name="Brown M.J."/>
            <person name="Chen G."/>
            <person name="Chen Z."/>
            <person name="Clerc-Blankenburg K.P."/>
            <person name="Davis C."/>
            <person name="Delgado O."/>
            <person name="Dinh H.H."/>
            <person name="Draper H."/>
            <person name="Gonzalez-Garay M.L."/>
            <person name="Havlak P."/>
            <person name="Jackson L.R."/>
            <person name="Jacob L.S."/>
            <person name="Kelly S.H."/>
            <person name="Li L."/>
            <person name="Li Z."/>
            <person name="Liu J."/>
            <person name="Liu W."/>
            <person name="Lu J."/>
            <person name="Maheshwari M."/>
            <person name="Nguyen B.-V."/>
            <person name="Okwuonu G.O."/>
            <person name="Pasternak S."/>
            <person name="Perez L.M."/>
            <person name="Plopper F.J.H."/>
            <person name="Santibanez J."/>
            <person name="Shen H."/>
            <person name="Tabor P.E."/>
            <person name="Verduzco D."/>
            <person name="Waldron L."/>
            <person name="Wang Q."/>
            <person name="Williams G.A."/>
            <person name="Zhang J."/>
            <person name="Zhou J."/>
            <person name="Allen C.C."/>
            <person name="Amin A.G."/>
            <person name="Anyalebechi V."/>
            <person name="Bailey M."/>
            <person name="Barbaria J.A."/>
            <person name="Bimage K.E."/>
            <person name="Bryant N.P."/>
            <person name="Burch P.E."/>
            <person name="Burkett C.E."/>
            <person name="Burrell K.L."/>
            <person name="Calderon E."/>
            <person name="Cardenas V."/>
            <person name="Carter K."/>
            <person name="Casias K."/>
            <person name="Cavazos I."/>
            <person name="Cavazos S.R."/>
            <person name="Ceasar H."/>
            <person name="Chacko J."/>
            <person name="Chan S.N."/>
            <person name="Chavez D."/>
            <person name="Christopoulos C."/>
            <person name="Chu J."/>
            <person name="Cockrell R."/>
            <person name="Cox C.D."/>
            <person name="Dang M."/>
            <person name="Dathorne S.R."/>
            <person name="David R."/>
            <person name="Davis C.M."/>
            <person name="Davy-Carroll L."/>
            <person name="Deshazo D.R."/>
            <person name="Donlin J.E."/>
            <person name="D'Souza L."/>
            <person name="Eaves K.A."/>
            <person name="Egan A."/>
            <person name="Emery-Cohen A.J."/>
            <person name="Escotto M."/>
            <person name="Flagg N."/>
            <person name="Forbes L.D."/>
            <person name="Gabisi A.M."/>
            <person name="Garza M."/>
            <person name="Hamilton C."/>
            <person name="Henderson N."/>
            <person name="Hernandez O."/>
            <person name="Hines S."/>
            <person name="Hogues M.E."/>
            <person name="Huang M."/>
            <person name="Idlebird D.G."/>
            <person name="Johnson R."/>
            <person name="Jolivet A."/>
            <person name="Jones S."/>
            <person name="Kagan R."/>
            <person name="King L.M."/>
            <person name="Leal B."/>
            <person name="Lebow H."/>
            <person name="Lee S."/>
            <person name="LeVan J.M."/>
            <person name="Lewis L.C."/>
            <person name="London P."/>
            <person name="Lorensuhewa L.M."/>
            <person name="Loulseged H."/>
            <person name="Lovett D.A."/>
            <person name="Lucier A."/>
            <person name="Lucier R.L."/>
            <person name="Ma J."/>
            <person name="Madu R.C."/>
            <person name="Mapua P."/>
            <person name="Martindale A.D."/>
            <person name="Martinez E."/>
            <person name="Massey E."/>
            <person name="Mawhiney S."/>
            <person name="Meador M.G."/>
            <person name="Mendez S."/>
            <person name="Mercado C."/>
            <person name="Mercado I.C."/>
            <person name="Merritt C.E."/>
            <person name="Miner Z.L."/>
            <person name="Minja E."/>
            <person name="Mitchell T."/>
            <person name="Mohabbat F."/>
            <person name="Mohabbat K."/>
            <person name="Montgomery B."/>
            <person name="Moore N."/>
            <person name="Morris S."/>
            <person name="Munidasa M."/>
            <person name="Ngo R.N."/>
            <person name="Nguyen N.B."/>
            <person name="Nickerson E."/>
            <person name="Nwaokelemeh O.O."/>
            <person name="Nwokenkwo S."/>
            <person name="Obregon M."/>
            <person name="Oguh M."/>
            <person name="Oragunye N."/>
            <person name="Oviedo R.J."/>
            <person name="Parish B.J."/>
            <person name="Parker D.N."/>
            <person name="Parrish J."/>
            <person name="Parks K.L."/>
            <person name="Paul H.A."/>
            <person name="Payton B.A."/>
            <person name="Perez A."/>
            <person name="Perrin W."/>
            <person name="Pickens A."/>
            <person name="Primus E.L."/>
            <person name="Pu L.-L."/>
            <person name="Puazo M."/>
            <person name="Quiles M.M."/>
            <person name="Quiroz J.B."/>
            <person name="Rabata D."/>
            <person name="Reeves K."/>
            <person name="Ruiz S.J."/>
            <person name="Shao H."/>
            <person name="Sisson I."/>
            <person name="Sonaike T."/>
            <person name="Sorelle R.P."/>
            <person name="Sutton A.E."/>
            <person name="Svatek A.F."/>
            <person name="Svetz L.A."/>
            <person name="Tamerisa K.S."/>
            <person name="Taylor T.R."/>
            <person name="Teague B."/>
            <person name="Thomas N."/>
            <person name="Thorn R.D."/>
            <person name="Trejos Z.Y."/>
            <person name="Trevino B.K."/>
            <person name="Ukegbu O.N."/>
            <person name="Urban J.B."/>
            <person name="Vasquez L.I."/>
            <person name="Vera V.A."/>
            <person name="Villasana D.M."/>
            <person name="Wang L."/>
            <person name="Ward-Moore S."/>
            <person name="Warren J.T."/>
            <person name="Wei X."/>
            <person name="White F."/>
            <person name="Williamson A.L."/>
            <person name="Wleczyk R."/>
            <person name="Wooden H.S."/>
            <person name="Wooden S.H."/>
            <person name="Yen J."/>
            <person name="Yoon L."/>
            <person name="Yoon V."/>
            <person name="Zorrilla S.E."/>
            <person name="Nelson D."/>
            <person name="Kucherlapati R."/>
            <person name="Weinstock G."/>
            <person name="Gibbs R.A."/>
        </authorList>
    </citation>
    <scope>NUCLEOTIDE SEQUENCE [LARGE SCALE GENOMIC DNA]</scope>
</reference>
<reference key="6">
    <citation type="submission" date="2005-07" db="EMBL/GenBank/DDBJ databases">
        <authorList>
            <person name="Mural R.J."/>
            <person name="Istrail S."/>
            <person name="Sutton G."/>
            <person name="Florea L."/>
            <person name="Halpern A.L."/>
            <person name="Mobarry C.M."/>
            <person name="Lippert R."/>
            <person name="Walenz B."/>
            <person name="Shatkay H."/>
            <person name="Dew I."/>
            <person name="Miller J.R."/>
            <person name="Flanigan M.J."/>
            <person name="Edwards N.J."/>
            <person name="Bolanos R."/>
            <person name="Fasulo D."/>
            <person name="Halldorsson B.V."/>
            <person name="Hannenhalli S."/>
            <person name="Turner R."/>
            <person name="Yooseph S."/>
            <person name="Lu F."/>
            <person name="Nusskern D.R."/>
            <person name="Shue B.C."/>
            <person name="Zheng X.H."/>
            <person name="Zhong F."/>
            <person name="Delcher A.L."/>
            <person name="Huson D.H."/>
            <person name="Kravitz S.A."/>
            <person name="Mouchard L."/>
            <person name="Reinert K."/>
            <person name="Remington K.A."/>
            <person name="Clark A.G."/>
            <person name="Waterman M.S."/>
            <person name="Eichler E.E."/>
            <person name="Adams M.D."/>
            <person name="Hunkapiller M.W."/>
            <person name="Myers E.W."/>
            <person name="Venter J.C."/>
        </authorList>
    </citation>
    <scope>NUCLEOTIDE SEQUENCE [LARGE SCALE GENOMIC DNA]</scope>
</reference>
<reference key="7">
    <citation type="journal article" date="2004" name="Genome Res.">
        <title>The status, quality, and expansion of the NIH full-length cDNA project: the Mammalian Gene Collection (MGC).</title>
        <authorList>
            <consortium name="The MGC Project Team"/>
        </authorList>
    </citation>
    <scope>NUCLEOTIDE SEQUENCE [LARGE SCALE MRNA] (ISOFORMS 1; 3 AND 5)</scope>
    <source>
        <tissue>Eye</tissue>
        <tissue>Lung</tissue>
        <tissue>Mammary gland</tissue>
    </source>
</reference>
<reference key="8">
    <citation type="submission" date="2008-12" db="UniProtKB">
        <authorList>
            <person name="Lubec G."/>
            <person name="Chen W.-Q."/>
            <person name="Sun Y."/>
        </authorList>
    </citation>
    <scope>PROTEIN SEQUENCE OF 47-70; 102-115; 145-160 AND 323-354</scope>
    <scope>IDENTIFICATION BY MASS SPECTROMETRY</scope>
    <source>
        <tissue>Fetal brain cortex</tissue>
    </source>
</reference>
<reference key="9">
    <citation type="journal article" date="2002" name="J. Virol.">
        <title>Distinct poly(rC) binding protein KH domain determinants for poliovirus translation initiation and viral RNA replication.</title>
        <authorList>
            <person name="Walter B.L."/>
            <person name="Parsley T.B."/>
            <person name="Ehrenfeld E."/>
            <person name="Semler B.L."/>
        </authorList>
    </citation>
    <scope>FUNCTION</scope>
    <scope>DOMAIN</scope>
</reference>
<reference key="10">
    <citation type="journal article" date="2003" name="Nature">
        <title>Proteomic characterization of the human centrosome by protein correlation profiling.</title>
        <authorList>
            <person name="Andersen J.S."/>
            <person name="Wilkinson C.J."/>
            <person name="Mayor T."/>
            <person name="Mortensen P."/>
            <person name="Nigg E.A."/>
            <person name="Mann M."/>
        </authorList>
    </citation>
    <scope>IDENTIFICATION BY MASS SPECTROMETRY</scope>
    <source>
        <tissue>Lymphoblast</tissue>
    </source>
</reference>
<reference key="11">
    <citation type="journal article" date="2006" name="Cell">
        <title>Global, in vivo, and site-specific phosphorylation dynamics in signaling networks.</title>
        <authorList>
            <person name="Olsen J.V."/>
            <person name="Blagoev B."/>
            <person name="Gnad F."/>
            <person name="Macek B."/>
            <person name="Kumar C."/>
            <person name="Mortensen P."/>
            <person name="Mann M."/>
        </authorList>
    </citation>
    <scope>IDENTIFICATION BY MASS SPECTROMETRY [LARGE SCALE ANALYSIS]</scope>
    <source>
        <tissue>Cervix carcinoma</tissue>
    </source>
</reference>
<reference key="12">
    <citation type="journal article" date="2007" name="J. Proteome Res.">
        <title>Improved titanium dioxide enrichment of phosphopeptides from HeLa cells and high confident phosphopeptide identification by cross-validation of MS/MS and MS/MS/MS spectra.</title>
        <authorList>
            <person name="Yu L.R."/>
            <person name="Zhu Z."/>
            <person name="Chan K.C."/>
            <person name="Issaq H.J."/>
            <person name="Dimitrov D.S."/>
            <person name="Veenstra T.D."/>
        </authorList>
    </citation>
    <scope>IDENTIFICATION BY MASS SPECTROMETRY [LARGE SCALE ANALYSIS]</scope>
    <source>
        <tissue>Cervix carcinoma</tissue>
    </source>
</reference>
<reference key="13">
    <citation type="journal article" date="2008" name="Mol. Cell">
        <title>Kinase-selective enrichment enables quantitative phosphoproteomics of the kinome across the cell cycle.</title>
        <authorList>
            <person name="Daub H."/>
            <person name="Olsen J.V."/>
            <person name="Bairlein M."/>
            <person name="Gnad F."/>
            <person name="Oppermann F.S."/>
            <person name="Korner R."/>
            <person name="Greff Z."/>
            <person name="Keri G."/>
            <person name="Stemmann O."/>
            <person name="Mann M."/>
        </authorList>
    </citation>
    <scope>IDENTIFICATION BY MASS SPECTROMETRY [LARGE SCALE ANALYSIS]</scope>
    <source>
        <tissue>Cervix carcinoma</tissue>
    </source>
</reference>
<reference key="14">
    <citation type="journal article" date="2008" name="Proc. Natl. Acad. Sci. U.S.A.">
        <title>A quantitative atlas of mitotic phosphorylation.</title>
        <authorList>
            <person name="Dephoure N."/>
            <person name="Zhou C."/>
            <person name="Villen J."/>
            <person name="Beausoleil S.A."/>
            <person name="Bakalarski C.E."/>
            <person name="Elledge S.J."/>
            <person name="Gygi S.P."/>
        </authorList>
    </citation>
    <scope>PHOSPHORYLATION [LARGE SCALE ANALYSIS] AT SER-272</scope>
    <scope>IDENTIFICATION BY MASS SPECTROMETRY [LARGE SCALE ANALYSIS]</scope>
    <source>
        <tissue>Cervix carcinoma</tissue>
    </source>
</reference>
<reference key="15">
    <citation type="journal article" date="2009" name="Mol. Cell. Proteomics">
        <title>Large-scale proteomics analysis of the human kinome.</title>
        <authorList>
            <person name="Oppermann F.S."/>
            <person name="Gnad F."/>
            <person name="Olsen J.V."/>
            <person name="Hornberger R."/>
            <person name="Greff Z."/>
            <person name="Keri G."/>
            <person name="Mann M."/>
            <person name="Daub H."/>
        </authorList>
    </citation>
    <scope>IDENTIFICATION BY MASS SPECTROMETRY [LARGE SCALE ANALYSIS]</scope>
</reference>
<reference key="16">
    <citation type="journal article" date="2009" name="Nat. Immunol.">
        <title>PCBP2 mediates degradation of the adaptor MAVS via the HECT ubiquitin ligase AIP4.</title>
        <authorList>
            <person name="You F."/>
            <person name="Sun H."/>
            <person name="Zhou X."/>
            <person name="Sun W."/>
            <person name="Liang S."/>
            <person name="Zhai Z."/>
            <person name="Jiang Z."/>
        </authorList>
    </citation>
    <scope>FUNCTION</scope>
    <scope>INTERACTION WITH IFIH1; RNF135; MAVS AND ITCH</scope>
</reference>
<reference key="17">
    <citation type="journal article" date="2009" name="RNA">
        <title>Control of c-myc mRNA stability by IGF2BP1-associated cytoplasmic RNPs.</title>
        <authorList>
            <person name="Weidensdorfer D."/>
            <person name="Stoehr N."/>
            <person name="Baude A."/>
            <person name="Lederer M."/>
            <person name="Koehn M."/>
            <person name="Schierhorn A."/>
            <person name="Buchmeier S."/>
            <person name="Wahle E."/>
            <person name="Huettelmaiery S."/>
        </authorList>
    </citation>
    <scope>IDENTIFICATION IN A MRNP COMPLEX</scope>
    <scope>SUBCELLULAR LOCATION</scope>
    <scope>IDENTIFICATION BY MASS SPECTROMETRY</scope>
</reference>
<reference key="18">
    <citation type="journal article" date="2009" name="Sci. Signal.">
        <title>Quantitative phosphoproteomic analysis of T cell receptor signaling reveals system-wide modulation of protein-protein interactions.</title>
        <authorList>
            <person name="Mayya V."/>
            <person name="Lundgren D.H."/>
            <person name="Hwang S.-I."/>
            <person name="Rezaul K."/>
            <person name="Wu L."/>
            <person name="Eng J.K."/>
            <person name="Rodionov V."/>
            <person name="Han D.K."/>
        </authorList>
    </citation>
    <scope>PHOSPHORYLATION [LARGE SCALE ANALYSIS] AT SER-189</scope>
    <scope>IDENTIFICATION BY MASS SPECTROMETRY [LARGE SCALE ANALYSIS]</scope>
    <source>
        <tissue>Leukemic T-cell</tissue>
    </source>
</reference>
<reference key="19">
    <citation type="journal article" date="2010" name="Sci. Signal.">
        <title>Quantitative phosphoproteomics reveals widespread full phosphorylation site occupancy during mitosis.</title>
        <authorList>
            <person name="Olsen J.V."/>
            <person name="Vermeulen M."/>
            <person name="Santamaria A."/>
            <person name="Kumar C."/>
            <person name="Miller M.L."/>
            <person name="Jensen L.J."/>
            <person name="Gnad F."/>
            <person name="Cox J."/>
            <person name="Jensen T.S."/>
            <person name="Nigg E.A."/>
            <person name="Brunak S."/>
            <person name="Mann M."/>
        </authorList>
    </citation>
    <scope>PHOSPHORYLATION [LARGE SCALE ANALYSIS] AT SER-173; SER-189 AND SER-364</scope>
    <scope>IDENTIFICATION BY MASS SPECTROMETRY [LARGE SCALE ANALYSIS]</scope>
    <source>
        <tissue>Cervix carcinoma</tissue>
    </source>
</reference>
<reference key="20">
    <citation type="journal article" date="2011" name="BMC Syst. Biol.">
        <title>Initial characterization of the human central proteome.</title>
        <authorList>
            <person name="Burkard T.R."/>
            <person name="Planyavsky M."/>
            <person name="Kaupe I."/>
            <person name="Breitwieser F.P."/>
            <person name="Buerckstuemmer T."/>
            <person name="Bennett K.L."/>
            <person name="Superti-Furga G."/>
            <person name="Colinge J."/>
        </authorList>
    </citation>
    <scope>IDENTIFICATION BY MASS SPECTROMETRY [LARGE SCALE ANALYSIS]</scope>
</reference>
<reference key="21">
    <citation type="journal article" date="2011" name="Sci. Signal.">
        <title>System-wide temporal characterization of the proteome and phosphoproteome of human embryonic stem cell differentiation.</title>
        <authorList>
            <person name="Rigbolt K.T."/>
            <person name="Prokhorova T.A."/>
            <person name="Akimov V."/>
            <person name="Henningsen J."/>
            <person name="Johansen P.T."/>
            <person name="Kratchmarova I."/>
            <person name="Kassem M."/>
            <person name="Mann M."/>
            <person name="Olsen J.V."/>
            <person name="Blagoev B."/>
        </authorList>
    </citation>
    <scope>PHOSPHORYLATION [LARGE SCALE ANALYSIS] AT SER-173; SER-364 AND SER-365</scope>
    <scope>IDENTIFICATION BY MASS SPECTROMETRY [LARGE SCALE ANALYSIS]</scope>
</reference>
<reference key="22">
    <citation type="journal article" date="2013" name="J. Proteome Res.">
        <title>Toward a comprehensive characterization of a human cancer cell phosphoproteome.</title>
        <authorList>
            <person name="Zhou H."/>
            <person name="Di Palma S."/>
            <person name="Preisinger C."/>
            <person name="Peng M."/>
            <person name="Polat A.N."/>
            <person name="Heck A.J."/>
            <person name="Mohammed S."/>
        </authorList>
    </citation>
    <scope>PHOSPHORYLATION [LARGE SCALE ANALYSIS] AT SER-173</scope>
    <scope>IDENTIFICATION BY MASS SPECTROMETRY [LARGE SCALE ANALYSIS]</scope>
    <source>
        <tissue>Cervix carcinoma</tissue>
        <tissue>Erythroleukemia</tissue>
    </source>
</reference>
<reference key="23">
    <citation type="journal article" date="2014" name="J. Proteomics">
        <title>An enzyme assisted RP-RPLC approach for in-depth analysis of human liver phosphoproteome.</title>
        <authorList>
            <person name="Bian Y."/>
            <person name="Song C."/>
            <person name="Cheng K."/>
            <person name="Dong M."/>
            <person name="Wang F."/>
            <person name="Huang J."/>
            <person name="Sun D."/>
            <person name="Wang L."/>
            <person name="Ye M."/>
            <person name="Zou H."/>
        </authorList>
    </citation>
    <scope>IDENTIFICATION BY MASS SPECTROMETRY [LARGE SCALE ANALYSIS]</scope>
    <source>
        <tissue>Liver</tissue>
    </source>
</reference>
<reference key="24">
    <citation type="journal article" date="2014" name="J. Virol.">
        <title>Inhibition of poliovirus-induced cleavage of cellular protein PCBP2 reduces the levels of viral RNA replication.</title>
        <authorList>
            <person name="Chase A.J."/>
            <person name="Daijogo S."/>
            <person name="Semler B.L."/>
        </authorList>
    </citation>
    <scope>FUNCTION (MICROBIAL INFECTION)</scope>
    <scope>CLEAVAGE BY PICORNAVIRUS PROTEINASE 3CD (MICROBIAL INFECTION)</scope>
</reference>
<reference key="25">
    <citation type="journal article" date="2015" name="Proteomics">
        <title>N-terminome analysis of the human mitochondrial proteome.</title>
        <authorList>
            <person name="Vaca Jacome A.S."/>
            <person name="Rabilloud T."/>
            <person name="Schaeffer-Reiss C."/>
            <person name="Rompais M."/>
            <person name="Ayoub D."/>
            <person name="Lane L."/>
            <person name="Bairoch A."/>
            <person name="Van Dorsselaer A."/>
            <person name="Carapito C."/>
        </authorList>
    </citation>
    <scope>IDENTIFICATION BY MASS SPECTROMETRY [LARGE SCALE ANALYSIS]</scope>
</reference>
<reference key="26">
    <citation type="journal article" date="2017" name="Nat. Struct. Mol. Biol.">
        <title>Site-specific mapping of the human SUMO proteome reveals co-modification with phosphorylation.</title>
        <authorList>
            <person name="Hendriks I.A."/>
            <person name="Lyon D."/>
            <person name="Young C."/>
            <person name="Jensen L.J."/>
            <person name="Vertegaal A.C."/>
            <person name="Nielsen M.L."/>
        </authorList>
    </citation>
    <scope>SUMOYLATION [LARGE SCALE ANALYSIS] AT LYS-115; LYS-185 AND LYS-322</scope>
    <scope>IDENTIFICATION BY MASS SPECTROMETRY [LARGE SCALE ANALYSIS]</scope>
</reference>
<reference key="27">
    <citation type="journal article" date="2022" name="Nat. Commun.">
        <title>PCBP2 maintains antiviral signaling homeostasis by regulating cGAS enzymatic activity via antagonizing its condensation.</title>
        <authorList>
            <person name="Gu H."/>
            <person name="Yang J."/>
            <person name="Zhang J."/>
            <person name="Song Y."/>
            <person name="Zhang Y."/>
            <person name="Xu P."/>
            <person name="Zhu Y."/>
            <person name="Wang L."/>
            <person name="Zhang P."/>
            <person name="Li L."/>
            <person name="Chen D."/>
            <person name="Sun Q."/>
        </authorList>
    </citation>
    <scope>FUNCTION</scope>
    <scope>INTERACTION WITH CGAS</scope>
</reference>
<reference key="28">
    <citation type="journal article" date="2005" name="J. Biol. Chem.">
        <title>Crystal structure of the first KH domain of human poly(C)-binding protein-2 in complex with a C-rich strand of human telomeric DNA at 1.7 A.</title>
        <authorList>
            <person name="Du Z."/>
            <person name="Lee J.K."/>
            <person name="Tjhen R."/>
            <person name="Li S."/>
            <person name="Pan H."/>
            <person name="Stroud R.M."/>
            <person name="James T.L."/>
        </authorList>
    </citation>
    <scope>X-RAY CRYSTALLOGRAPHY (1.7 ANGSTROMS) OF 11-82 IN COMPLEX WITH DNA</scope>
</reference>
<reference key="29">
    <citation type="journal article" date="2007" name="Nucleic Acids Res.">
        <title>Crystal structure of the third KH domain of human poly(C)-binding protein-2 in complex with a C-rich strand of human telomeric DNA at 1.6 A resolution.</title>
        <authorList>
            <person name="Fenn S."/>
            <person name="Du Z."/>
            <person name="Lee J.K."/>
            <person name="Tjhen R."/>
            <person name="Stroud R.M."/>
            <person name="James T.L."/>
        </authorList>
    </citation>
    <scope>X-RAY CRYSTALLOGRAPHY (1.6 ANGSTROMS) OF 285-359 IN COMPLEX WITH DNA</scope>
</reference>
<reference key="30">
    <citation type="journal article" date="2007" name="RNA">
        <title>X-ray crystallographic and NMR studies of protein-protein and protein-nucleic acid interactions involving the KH domains from human poly(C)-binding protein-2.</title>
        <authorList>
            <person name="Du Z."/>
            <person name="Lee J.K."/>
            <person name="Fenn S."/>
            <person name="Tjhen R."/>
            <person name="Stroud R.M."/>
            <person name="James T.L."/>
        </authorList>
    </citation>
    <scope>X-RAY CRYSTALLOGRAPHY (2.12 ANGSTROMS) OF 11-82 IN COMPLEX WITH DNA</scope>
</reference>
<reference key="31">
    <citation type="journal article" date="2008" name="J. Biol. Chem.">
        <title>Structure of a construct of a human poly(C)-binding protein containing the first and second KH domains reveals insights into its regulatory mechanisms.</title>
        <authorList>
            <person name="Du Z."/>
            <person name="Fenn S."/>
            <person name="Tjhen R."/>
            <person name="James T.L."/>
        </authorList>
    </citation>
    <scope>STRUCTURE BY NMR OF 11-169</scope>
</reference>
<sequence length="365" mass="38580">MDTGVIEGGLNVTLTIRLLMHGKEVGSIIGKKGESVKKMREESGARINISEGNCPERIITLAGPTNAIFKAFAMIIDKLEEDISSSMTNSTAASRPPVTLRLVVPASQCGSLIGKGGCKIKEIRESTGAQVQVAGDMLPNSTERAITIAGIPQSIIECVKQICVVMLETLSQSPPKGVTIPYRPKPSSSPVIFAGGQDRYSTGSDSASFPHTTPSMCLNPDLEGPPLEAYTIQGQYAIPQPDLTKLHQLAMQQSHFPMTHGNTGFSGIESSSPEVKGYWGLDASAQTTSHELTIPNDLIGCIIGRQGAKINEIRQMSGAQIKIANPVEGSTDRQVTITGSAASISLAQYLINVRLSSETGGMGSS</sequence>
<dbReference type="EMBL" id="X78136">
    <property type="protein sequence ID" value="CAA55015.1"/>
    <property type="molecule type" value="mRNA"/>
</dbReference>
<dbReference type="EMBL" id="AB188306">
    <property type="protein sequence ID" value="BAD36897.1"/>
    <property type="molecule type" value="mRNA"/>
</dbReference>
<dbReference type="EMBL" id="AK292141">
    <property type="protein sequence ID" value="BAF84830.1"/>
    <property type="molecule type" value="mRNA"/>
</dbReference>
<dbReference type="EMBL" id="AK302067">
    <property type="protein sequence ID" value="BAG63457.1"/>
    <property type="molecule type" value="mRNA"/>
</dbReference>
<dbReference type="EMBL" id="AB208825">
    <property type="protein sequence ID" value="BAD92062.1"/>
    <property type="status" value="ALT_INIT"/>
    <property type="molecule type" value="mRNA"/>
</dbReference>
<dbReference type="EMBL" id="AC023509">
    <property type="status" value="NOT_ANNOTATED_CDS"/>
    <property type="molecule type" value="Genomic_DNA"/>
</dbReference>
<dbReference type="EMBL" id="AC068889">
    <property type="status" value="NOT_ANNOTATED_CDS"/>
    <property type="molecule type" value="Genomic_DNA"/>
</dbReference>
<dbReference type="EMBL" id="CH471054">
    <property type="protein sequence ID" value="EAW96706.1"/>
    <property type="molecule type" value="Genomic_DNA"/>
</dbReference>
<dbReference type="EMBL" id="CH471054">
    <property type="protein sequence ID" value="EAW96707.1"/>
    <property type="molecule type" value="Genomic_DNA"/>
</dbReference>
<dbReference type="EMBL" id="CH471054">
    <property type="protein sequence ID" value="EAW96709.1"/>
    <property type="molecule type" value="Genomic_DNA"/>
</dbReference>
<dbReference type="EMBL" id="CH471054">
    <property type="protein sequence ID" value="EAW96711.1"/>
    <property type="molecule type" value="Genomic_DNA"/>
</dbReference>
<dbReference type="EMBL" id="BC001155">
    <property type="protein sequence ID" value="AAH01155.1"/>
    <property type="molecule type" value="mRNA"/>
</dbReference>
<dbReference type="EMBL" id="BC071942">
    <property type="protein sequence ID" value="AAH71942.1"/>
    <property type="molecule type" value="mRNA"/>
</dbReference>
<dbReference type="EMBL" id="BC107688">
    <property type="protein sequence ID" value="AAI07689.1"/>
    <property type="molecule type" value="mRNA"/>
</dbReference>
<dbReference type="CCDS" id="CCDS44900.1">
    <molecule id="Q15366-2"/>
</dbReference>
<dbReference type="CCDS" id="CCDS44901.1">
    <molecule id="Q15366-1"/>
</dbReference>
<dbReference type="CCDS" id="CCDS44902.1">
    <molecule id="Q15366-5"/>
</dbReference>
<dbReference type="CCDS" id="CCDS44903.1">
    <molecule id="Q15366-4"/>
</dbReference>
<dbReference type="CCDS" id="CCDS44904.1">
    <molecule id="Q15366-7"/>
</dbReference>
<dbReference type="CCDS" id="CCDS55830.1">
    <molecule id="Q15366-6"/>
</dbReference>
<dbReference type="CCDS" id="CCDS8859.1">
    <molecule id="Q15366-3"/>
</dbReference>
<dbReference type="PIR" id="S65679">
    <property type="entry name" value="S42471"/>
</dbReference>
<dbReference type="RefSeq" id="NP_001092090.1">
    <molecule id="Q15366-4"/>
    <property type="nucleotide sequence ID" value="NM_001098620.3"/>
</dbReference>
<dbReference type="RefSeq" id="NP_001122383.1">
    <molecule id="Q15366-1"/>
    <property type="nucleotide sequence ID" value="NM_001128911.2"/>
</dbReference>
<dbReference type="RefSeq" id="NP_001122384.1">
    <molecule id="Q15366-6"/>
    <property type="nucleotide sequence ID" value="NM_001128912.2"/>
</dbReference>
<dbReference type="RefSeq" id="NP_001122385.1">
    <molecule id="Q15366-5"/>
    <property type="nucleotide sequence ID" value="NM_001128913.2"/>
</dbReference>
<dbReference type="RefSeq" id="NP_001122386.1">
    <molecule id="Q15366-7"/>
    <property type="nucleotide sequence ID" value="NM_001128914.2"/>
</dbReference>
<dbReference type="RefSeq" id="NP_005007.2">
    <molecule id="Q15366-2"/>
    <property type="nucleotide sequence ID" value="NM_005016.5"/>
</dbReference>
<dbReference type="RefSeq" id="NP_114366.1">
    <molecule id="Q15366-3"/>
    <property type="nucleotide sequence ID" value="NM_031989.5"/>
</dbReference>
<dbReference type="PDB" id="2AXY">
    <property type="method" value="X-ray"/>
    <property type="resolution" value="1.70 A"/>
    <property type="chains" value="A/B/C/D=11-82"/>
</dbReference>
<dbReference type="PDB" id="2JZX">
    <property type="method" value="NMR"/>
    <property type="chains" value="A=11-169"/>
</dbReference>
<dbReference type="PDB" id="2P2R">
    <property type="method" value="X-ray"/>
    <property type="resolution" value="1.60 A"/>
    <property type="chains" value="A=285-359"/>
</dbReference>
<dbReference type="PDB" id="2PQU">
    <property type="method" value="X-ray"/>
    <property type="resolution" value="2.12 A"/>
    <property type="chains" value="A/B/C/D=11-82"/>
</dbReference>
<dbReference type="PDB" id="2PY9">
    <property type="method" value="X-ray"/>
    <property type="resolution" value="2.56 A"/>
    <property type="chains" value="A/B/C/D=11-82"/>
</dbReference>
<dbReference type="PDBsum" id="2AXY"/>
<dbReference type="PDBsum" id="2JZX"/>
<dbReference type="PDBsum" id="2P2R"/>
<dbReference type="PDBsum" id="2PQU"/>
<dbReference type="PDBsum" id="2PY9"/>
<dbReference type="SASBDB" id="Q15366"/>
<dbReference type="SMR" id="Q15366"/>
<dbReference type="BioGRID" id="111127">
    <property type="interactions" value="307"/>
</dbReference>
<dbReference type="CORUM" id="Q15366"/>
<dbReference type="DIP" id="DIP-58934N"/>
<dbReference type="FunCoup" id="Q15366">
    <property type="interactions" value="3537"/>
</dbReference>
<dbReference type="IntAct" id="Q15366">
    <property type="interactions" value="95"/>
</dbReference>
<dbReference type="MINT" id="Q15366"/>
<dbReference type="STRING" id="9606.ENSP00000352438"/>
<dbReference type="ChEMBL" id="CHEMBL4295826"/>
<dbReference type="GlyGen" id="Q15366">
    <property type="glycosylation" value="4 sites, 2 N-linked glycans (2 sites), 1 O-linked glycan (2 sites)"/>
</dbReference>
<dbReference type="iPTMnet" id="Q15366"/>
<dbReference type="MetOSite" id="Q15366"/>
<dbReference type="PhosphoSitePlus" id="Q15366"/>
<dbReference type="SwissPalm" id="Q15366"/>
<dbReference type="BioMuta" id="PCBP2"/>
<dbReference type="DMDM" id="6707736"/>
<dbReference type="jPOST" id="Q15366"/>
<dbReference type="MassIVE" id="Q15366"/>
<dbReference type="PaxDb" id="9606-ENSP00000352438"/>
<dbReference type="PeptideAtlas" id="Q15366"/>
<dbReference type="ProteomicsDB" id="32176"/>
<dbReference type="ProteomicsDB" id="5458"/>
<dbReference type="ProteomicsDB" id="60542">
    <molecule id="Q15366-1"/>
</dbReference>
<dbReference type="ProteomicsDB" id="60543">
    <molecule id="Q15366-2"/>
</dbReference>
<dbReference type="ProteomicsDB" id="60544">
    <molecule id="Q15366-3"/>
</dbReference>
<dbReference type="ProteomicsDB" id="60545">
    <molecule id="Q15366-4"/>
</dbReference>
<dbReference type="ProteomicsDB" id="60546">
    <molecule id="Q15366-5"/>
</dbReference>
<dbReference type="Pumba" id="Q15366"/>
<dbReference type="Antibodypedia" id="15218">
    <property type="antibodies" value="287 antibodies from 36 providers"/>
</dbReference>
<dbReference type="DNASU" id="5094"/>
<dbReference type="Ensembl" id="ENST00000359282.9">
    <molecule id="Q15366-4"/>
    <property type="protein sequence ID" value="ENSP00000352228.5"/>
    <property type="gene ID" value="ENSG00000197111.16"/>
</dbReference>
<dbReference type="Ensembl" id="ENST00000359462.9">
    <molecule id="Q15366-2"/>
    <property type="protein sequence ID" value="ENSP00000352438.5"/>
    <property type="gene ID" value="ENSG00000197111.16"/>
</dbReference>
<dbReference type="Ensembl" id="ENST00000437231.5">
    <molecule id="Q15366-7"/>
    <property type="protein sequence ID" value="ENSP00000390304.1"/>
    <property type="gene ID" value="ENSG00000197111.16"/>
</dbReference>
<dbReference type="Ensembl" id="ENST00000439930.7">
    <molecule id="Q15366-1"/>
    <property type="protein sequence ID" value="ENSP00000408949.2"/>
    <property type="gene ID" value="ENSG00000197111.16"/>
</dbReference>
<dbReference type="Ensembl" id="ENST00000447282.5">
    <molecule id="Q15366-5"/>
    <property type="protein sequence ID" value="ENSP00000394116.1"/>
    <property type="gene ID" value="ENSG00000197111.16"/>
</dbReference>
<dbReference type="Ensembl" id="ENST00000455667.7">
    <molecule id="Q15366-7"/>
    <property type="protein sequence ID" value="ENSP00000388008.3"/>
    <property type="gene ID" value="ENSG00000197111.16"/>
</dbReference>
<dbReference type="Ensembl" id="ENST00000546463.6">
    <molecule id="Q15366-3"/>
    <property type="protein sequence ID" value="ENSP00000448762.2"/>
    <property type="gene ID" value="ENSG00000197111.16"/>
</dbReference>
<dbReference type="Ensembl" id="ENST00000548933.5">
    <molecule id="Q15366-5"/>
    <property type="protein sequence ID" value="ENSP00000449062.1"/>
    <property type="gene ID" value="ENSG00000197111.16"/>
</dbReference>
<dbReference type="Ensembl" id="ENST00000552296.6">
    <molecule id="Q15366-6"/>
    <property type="protein sequence ID" value="ENSP00000448927.2"/>
    <property type="gene ID" value="ENSG00000197111.16"/>
</dbReference>
<dbReference type="Ensembl" id="ENST00000552819.5">
    <molecule id="Q15366-8"/>
    <property type="protein sequence ID" value="ENSP00000449070.1"/>
    <property type="gene ID" value="ENSG00000197111.16"/>
</dbReference>
<dbReference type="GeneID" id="5094"/>
<dbReference type="KEGG" id="hsa:5094"/>
<dbReference type="MANE-Select" id="ENST00000546463.6">
    <molecule id="Q15366-3"/>
    <property type="protein sequence ID" value="ENSP00000448762.2"/>
    <property type="RefSeq nucleotide sequence ID" value="NM_031989.5"/>
    <property type="RefSeq protein sequence ID" value="NP_114366.1"/>
</dbReference>
<dbReference type="UCSC" id="uc001sdb.5">
    <molecule id="Q15366-1"/>
    <property type="organism name" value="human"/>
</dbReference>
<dbReference type="UCSC" id="uc058oqk.1">
    <property type="organism name" value="human"/>
</dbReference>
<dbReference type="AGR" id="HGNC:8648"/>
<dbReference type="CTD" id="5094"/>
<dbReference type="DisGeNET" id="5094"/>
<dbReference type="GeneCards" id="PCBP2"/>
<dbReference type="HGNC" id="HGNC:8648">
    <property type="gene designation" value="PCBP2"/>
</dbReference>
<dbReference type="HPA" id="ENSG00000197111">
    <property type="expression patterns" value="Low tissue specificity"/>
</dbReference>
<dbReference type="MIM" id="601210">
    <property type="type" value="gene"/>
</dbReference>
<dbReference type="neXtProt" id="NX_Q15366"/>
<dbReference type="OpenTargets" id="ENSG00000197111"/>
<dbReference type="PharmGKB" id="PA32987"/>
<dbReference type="VEuPathDB" id="HostDB:ENSG00000197111"/>
<dbReference type="eggNOG" id="KOG2190">
    <property type="taxonomic scope" value="Eukaryota"/>
</dbReference>
<dbReference type="GeneTree" id="ENSGT00940000154129"/>
<dbReference type="HOGENOM" id="CLU_022670_0_1_1"/>
<dbReference type="InParanoid" id="Q15366"/>
<dbReference type="OMA" id="SIAKEPH"/>
<dbReference type="OrthoDB" id="442947at2759"/>
<dbReference type="PAN-GO" id="Q15366">
    <property type="GO annotations" value="7 GO annotations based on evolutionary models"/>
</dbReference>
<dbReference type="PhylomeDB" id="Q15366"/>
<dbReference type="TreeFam" id="TF318292"/>
<dbReference type="PathwayCommons" id="Q15366"/>
<dbReference type="Reactome" id="R-HSA-72163">
    <property type="pathway name" value="mRNA Splicing - Major Pathway"/>
</dbReference>
<dbReference type="Reactome" id="R-HSA-72203">
    <property type="pathway name" value="Processing of Capped Intron-Containing Pre-mRNA"/>
</dbReference>
<dbReference type="Reactome" id="R-HSA-936440">
    <property type="pathway name" value="Negative regulators of DDX58/IFIH1 signaling"/>
</dbReference>
<dbReference type="Reactome" id="R-HSA-9692916">
    <property type="pathway name" value="SARS-CoV-1 activates/modulates innate immune responses"/>
</dbReference>
<dbReference type="SignaLink" id="Q15366"/>
<dbReference type="SIGNOR" id="Q15366"/>
<dbReference type="BioGRID-ORCS" id="5094">
    <property type="hits" value="760 hits in 1180 CRISPR screens"/>
</dbReference>
<dbReference type="CD-CODE" id="232F8A39">
    <property type="entry name" value="P-body"/>
</dbReference>
<dbReference type="CD-CODE" id="91857CE7">
    <property type="entry name" value="Nucleolus"/>
</dbReference>
<dbReference type="CD-CODE" id="DEE660B4">
    <property type="entry name" value="Stress granule"/>
</dbReference>
<dbReference type="CD-CODE" id="FB4E32DD">
    <property type="entry name" value="Presynaptic clusters and postsynaptic densities"/>
</dbReference>
<dbReference type="ChiTaRS" id="PCBP2">
    <property type="organism name" value="human"/>
</dbReference>
<dbReference type="EvolutionaryTrace" id="Q15366"/>
<dbReference type="GeneWiki" id="PCBP2"/>
<dbReference type="GenomeRNAi" id="5094"/>
<dbReference type="Pharos" id="Q15366">
    <property type="development level" value="Tbio"/>
</dbReference>
<dbReference type="PRO" id="PR:Q15366"/>
<dbReference type="Proteomes" id="UP000005640">
    <property type="component" value="Chromosome 12"/>
</dbReference>
<dbReference type="RNAct" id="Q15366">
    <property type="molecule type" value="protein"/>
</dbReference>
<dbReference type="Bgee" id="ENSG00000197111">
    <property type="expression patterns" value="Expressed in ganglionic eminence and 205 other cell types or tissues"/>
</dbReference>
<dbReference type="ExpressionAtlas" id="Q15366">
    <property type="expression patterns" value="baseline and differential"/>
</dbReference>
<dbReference type="GO" id="GO:0005737">
    <property type="term" value="C:cytoplasm"/>
    <property type="evidence" value="ECO:0000314"/>
    <property type="project" value="UniProtKB"/>
</dbReference>
<dbReference type="GO" id="GO:0005829">
    <property type="term" value="C:cytosol"/>
    <property type="evidence" value="ECO:0000314"/>
    <property type="project" value="HPA"/>
</dbReference>
<dbReference type="GO" id="GO:0070062">
    <property type="term" value="C:extracellular exosome"/>
    <property type="evidence" value="ECO:0007005"/>
    <property type="project" value="UniProtKB"/>
</dbReference>
<dbReference type="GO" id="GO:0005925">
    <property type="term" value="C:focal adhesion"/>
    <property type="evidence" value="ECO:0007005"/>
    <property type="project" value="UniProtKB"/>
</dbReference>
<dbReference type="GO" id="GO:0016020">
    <property type="term" value="C:membrane"/>
    <property type="evidence" value="ECO:0007005"/>
    <property type="project" value="UniProtKB"/>
</dbReference>
<dbReference type="GO" id="GO:0005654">
    <property type="term" value="C:nucleoplasm"/>
    <property type="evidence" value="ECO:0000314"/>
    <property type="project" value="HPA"/>
</dbReference>
<dbReference type="GO" id="GO:0005634">
    <property type="term" value="C:nucleus"/>
    <property type="evidence" value="ECO:0000314"/>
    <property type="project" value="UniProtKB"/>
</dbReference>
<dbReference type="GO" id="GO:1990904">
    <property type="term" value="C:ribonucleoprotein complex"/>
    <property type="evidence" value="ECO:0007669"/>
    <property type="project" value="UniProtKB-KW"/>
</dbReference>
<dbReference type="GO" id="GO:0019899">
    <property type="term" value="F:enzyme binding"/>
    <property type="evidence" value="ECO:0000353"/>
    <property type="project" value="UniProtKB"/>
</dbReference>
<dbReference type="GO" id="GO:0106222">
    <property type="term" value="F:lncRNA binding"/>
    <property type="evidence" value="ECO:0000314"/>
    <property type="project" value="FlyBase"/>
</dbReference>
<dbReference type="GO" id="GO:0003729">
    <property type="term" value="F:mRNA binding"/>
    <property type="evidence" value="ECO:0000318"/>
    <property type="project" value="GO_Central"/>
</dbReference>
<dbReference type="GO" id="GO:0140585">
    <property type="term" value="F:promoter-enhancer loop anchoring activity"/>
    <property type="evidence" value="ECO:0000315"/>
    <property type="project" value="FlyBase"/>
</dbReference>
<dbReference type="GO" id="GO:0003723">
    <property type="term" value="F:RNA binding"/>
    <property type="evidence" value="ECO:0000314"/>
    <property type="project" value="UniProtKB"/>
</dbReference>
<dbReference type="GO" id="GO:0003697">
    <property type="term" value="F:single-stranded DNA binding"/>
    <property type="evidence" value="ECO:0000318"/>
    <property type="project" value="GO_Central"/>
</dbReference>
<dbReference type="GO" id="GO:0031625">
    <property type="term" value="F:ubiquitin protein ligase binding"/>
    <property type="evidence" value="ECO:0000353"/>
    <property type="project" value="UniProtKB"/>
</dbReference>
<dbReference type="GO" id="GO:0140588">
    <property type="term" value="P:chromatin looping"/>
    <property type="evidence" value="ECO:0000315"/>
    <property type="project" value="FlyBase"/>
</dbReference>
<dbReference type="GO" id="GO:0051607">
    <property type="term" value="P:defense response to virus"/>
    <property type="evidence" value="ECO:0007669"/>
    <property type="project" value="UniProtKB-KW"/>
</dbReference>
<dbReference type="GO" id="GO:0045087">
    <property type="term" value="P:innate immune response"/>
    <property type="evidence" value="ECO:0007669"/>
    <property type="project" value="UniProtKB-KW"/>
</dbReference>
<dbReference type="GO" id="GO:0075522">
    <property type="term" value="P:IRES-dependent viral translational initiation"/>
    <property type="evidence" value="ECO:0000314"/>
    <property type="project" value="UniProtKB"/>
</dbReference>
<dbReference type="GO" id="GO:0016071">
    <property type="term" value="P:mRNA metabolic process"/>
    <property type="evidence" value="ECO:0000303"/>
    <property type="project" value="UniProtKB"/>
</dbReference>
<dbReference type="GO" id="GO:0160049">
    <property type="term" value="P:negative regulation of cGAS/STING signaling pathway"/>
    <property type="evidence" value="ECO:0000314"/>
    <property type="project" value="UniProt"/>
</dbReference>
<dbReference type="GO" id="GO:0050687">
    <property type="term" value="P:negative regulation of defense response to virus"/>
    <property type="evidence" value="ECO:0000315"/>
    <property type="project" value="UniProtKB"/>
</dbReference>
<dbReference type="GO" id="GO:0043161">
    <property type="term" value="P:proteasome-mediated ubiquitin-dependent protein catabolic process"/>
    <property type="evidence" value="ECO:0000315"/>
    <property type="project" value="UniProtKB"/>
</dbReference>
<dbReference type="GO" id="GO:0006357">
    <property type="term" value="P:regulation of transcription by RNA polymerase II"/>
    <property type="evidence" value="ECO:0000318"/>
    <property type="project" value="GO_Central"/>
</dbReference>
<dbReference type="GO" id="GO:0039694">
    <property type="term" value="P:viral RNA genome replication"/>
    <property type="evidence" value="ECO:0000314"/>
    <property type="project" value="UniProtKB"/>
</dbReference>
<dbReference type="CDD" id="cd22515">
    <property type="entry name" value="KH-I_PCBP1_2_rpt1"/>
    <property type="match status" value="1"/>
</dbReference>
<dbReference type="CDD" id="cd22518">
    <property type="entry name" value="KH-I_PCBP1_2_rpt2"/>
    <property type="match status" value="1"/>
</dbReference>
<dbReference type="CDD" id="cd22521">
    <property type="entry name" value="KH-I_PCBP1_2_rpt3"/>
    <property type="match status" value="1"/>
</dbReference>
<dbReference type="FunFam" id="3.30.1370.10:FF:000002">
    <property type="entry name" value="poly(RC)-binding protein 2 isoform X1"/>
    <property type="match status" value="1"/>
</dbReference>
<dbReference type="FunFam" id="3.30.1370.10:FF:000003">
    <property type="entry name" value="poly(RC)-binding protein 2 isoform X1"/>
    <property type="match status" value="1"/>
</dbReference>
<dbReference type="FunFam" id="3.30.1370.10:FF:000005">
    <property type="entry name" value="poly(RC)-binding protein 2 isoform X1"/>
    <property type="match status" value="1"/>
</dbReference>
<dbReference type="Gene3D" id="3.30.1370.10">
    <property type="entry name" value="K Homology domain, type 1"/>
    <property type="match status" value="3"/>
</dbReference>
<dbReference type="InterPro" id="IPR004087">
    <property type="entry name" value="KH_dom"/>
</dbReference>
<dbReference type="InterPro" id="IPR004088">
    <property type="entry name" value="KH_dom_type_1"/>
</dbReference>
<dbReference type="InterPro" id="IPR036612">
    <property type="entry name" value="KH_dom_type_1_sf"/>
</dbReference>
<dbReference type="PANTHER" id="PTHR10288">
    <property type="entry name" value="KH DOMAIN CONTAINING RNA BINDING PROTEIN"/>
    <property type="match status" value="1"/>
</dbReference>
<dbReference type="Pfam" id="PF00013">
    <property type="entry name" value="KH_1"/>
    <property type="match status" value="3"/>
</dbReference>
<dbReference type="SMART" id="SM00322">
    <property type="entry name" value="KH"/>
    <property type="match status" value="3"/>
</dbReference>
<dbReference type="SUPFAM" id="SSF54791">
    <property type="entry name" value="Eukaryotic type KH-domain (KH-domain type I)"/>
    <property type="match status" value="3"/>
</dbReference>
<dbReference type="PROSITE" id="PS50084">
    <property type="entry name" value="KH_TYPE_1"/>
    <property type="match status" value="3"/>
</dbReference>
<proteinExistence type="evidence at protein level"/>